<dbReference type="EMBL" id="AP009152">
    <property type="protein sequence ID" value="BAG29686.1"/>
    <property type="molecule type" value="Genomic_DNA"/>
</dbReference>
<dbReference type="RefSeq" id="WP_012398407.1">
    <property type="nucleotide sequence ID" value="NZ_VECX01000006.1"/>
</dbReference>
<dbReference type="SMR" id="B2GI94"/>
<dbReference type="STRING" id="378753.KRH_13390"/>
<dbReference type="KEGG" id="krh:KRH_13390"/>
<dbReference type="eggNOG" id="COG0231">
    <property type="taxonomic scope" value="Bacteria"/>
</dbReference>
<dbReference type="HOGENOM" id="CLU_074944_0_1_11"/>
<dbReference type="OrthoDB" id="9801844at2"/>
<dbReference type="UniPathway" id="UPA00345"/>
<dbReference type="Proteomes" id="UP000008838">
    <property type="component" value="Chromosome"/>
</dbReference>
<dbReference type="GO" id="GO:0005737">
    <property type="term" value="C:cytoplasm"/>
    <property type="evidence" value="ECO:0007669"/>
    <property type="project" value="UniProtKB-SubCell"/>
</dbReference>
<dbReference type="GO" id="GO:0003746">
    <property type="term" value="F:translation elongation factor activity"/>
    <property type="evidence" value="ECO:0007669"/>
    <property type="project" value="UniProtKB-UniRule"/>
</dbReference>
<dbReference type="GO" id="GO:0043043">
    <property type="term" value="P:peptide biosynthetic process"/>
    <property type="evidence" value="ECO:0007669"/>
    <property type="project" value="InterPro"/>
</dbReference>
<dbReference type="CDD" id="cd04470">
    <property type="entry name" value="S1_EF-P_repeat_1"/>
    <property type="match status" value="1"/>
</dbReference>
<dbReference type="CDD" id="cd05794">
    <property type="entry name" value="S1_EF-P_repeat_2"/>
    <property type="match status" value="1"/>
</dbReference>
<dbReference type="FunFam" id="2.30.30.30:FF:000003">
    <property type="entry name" value="Elongation factor P"/>
    <property type="match status" value="1"/>
</dbReference>
<dbReference type="FunFam" id="2.40.50.140:FF:000004">
    <property type="entry name" value="Elongation factor P"/>
    <property type="match status" value="1"/>
</dbReference>
<dbReference type="FunFam" id="2.40.50.140:FF:000009">
    <property type="entry name" value="Elongation factor P"/>
    <property type="match status" value="1"/>
</dbReference>
<dbReference type="Gene3D" id="2.30.30.30">
    <property type="match status" value="1"/>
</dbReference>
<dbReference type="Gene3D" id="2.40.50.140">
    <property type="entry name" value="Nucleic acid-binding proteins"/>
    <property type="match status" value="2"/>
</dbReference>
<dbReference type="HAMAP" id="MF_00141">
    <property type="entry name" value="EF_P"/>
    <property type="match status" value="1"/>
</dbReference>
<dbReference type="InterPro" id="IPR015365">
    <property type="entry name" value="Elong-fact-P_C"/>
</dbReference>
<dbReference type="InterPro" id="IPR012340">
    <property type="entry name" value="NA-bd_OB-fold"/>
</dbReference>
<dbReference type="InterPro" id="IPR014722">
    <property type="entry name" value="Rib_uL2_dom2"/>
</dbReference>
<dbReference type="InterPro" id="IPR020599">
    <property type="entry name" value="Transl_elong_fac_P/YeiP"/>
</dbReference>
<dbReference type="InterPro" id="IPR013185">
    <property type="entry name" value="Transl_elong_KOW-like"/>
</dbReference>
<dbReference type="InterPro" id="IPR001059">
    <property type="entry name" value="Transl_elong_P/YeiP_cen"/>
</dbReference>
<dbReference type="InterPro" id="IPR013852">
    <property type="entry name" value="Transl_elong_P/YeiP_CS"/>
</dbReference>
<dbReference type="InterPro" id="IPR011768">
    <property type="entry name" value="Transl_elongation_fac_P"/>
</dbReference>
<dbReference type="InterPro" id="IPR008991">
    <property type="entry name" value="Translation_prot_SH3-like_sf"/>
</dbReference>
<dbReference type="NCBIfam" id="TIGR00038">
    <property type="entry name" value="efp"/>
    <property type="match status" value="1"/>
</dbReference>
<dbReference type="NCBIfam" id="NF001810">
    <property type="entry name" value="PRK00529.1"/>
    <property type="match status" value="1"/>
</dbReference>
<dbReference type="PANTHER" id="PTHR30053">
    <property type="entry name" value="ELONGATION FACTOR P"/>
    <property type="match status" value="1"/>
</dbReference>
<dbReference type="PANTHER" id="PTHR30053:SF12">
    <property type="entry name" value="ELONGATION FACTOR P (EF-P) FAMILY PROTEIN"/>
    <property type="match status" value="1"/>
</dbReference>
<dbReference type="Pfam" id="PF01132">
    <property type="entry name" value="EFP"/>
    <property type="match status" value="1"/>
</dbReference>
<dbReference type="Pfam" id="PF08207">
    <property type="entry name" value="EFP_N"/>
    <property type="match status" value="1"/>
</dbReference>
<dbReference type="Pfam" id="PF09285">
    <property type="entry name" value="Elong-fact-P_C"/>
    <property type="match status" value="1"/>
</dbReference>
<dbReference type="PIRSF" id="PIRSF005901">
    <property type="entry name" value="EF-P"/>
    <property type="match status" value="1"/>
</dbReference>
<dbReference type="SMART" id="SM01185">
    <property type="entry name" value="EFP"/>
    <property type="match status" value="1"/>
</dbReference>
<dbReference type="SMART" id="SM00841">
    <property type="entry name" value="Elong-fact-P_C"/>
    <property type="match status" value="1"/>
</dbReference>
<dbReference type="SUPFAM" id="SSF50249">
    <property type="entry name" value="Nucleic acid-binding proteins"/>
    <property type="match status" value="2"/>
</dbReference>
<dbReference type="SUPFAM" id="SSF50104">
    <property type="entry name" value="Translation proteins SH3-like domain"/>
    <property type="match status" value="1"/>
</dbReference>
<dbReference type="PROSITE" id="PS01275">
    <property type="entry name" value="EFP"/>
    <property type="match status" value="1"/>
</dbReference>
<protein>
    <recommendedName>
        <fullName evidence="1">Elongation factor P</fullName>
        <shortName evidence="1">EF-P</shortName>
    </recommendedName>
</protein>
<organism>
    <name type="scientific">Kocuria rhizophila (strain ATCC 9341 / DSM 348 / NBRC 103217 / DC2201)</name>
    <dbReference type="NCBI Taxonomy" id="378753"/>
    <lineage>
        <taxon>Bacteria</taxon>
        <taxon>Bacillati</taxon>
        <taxon>Actinomycetota</taxon>
        <taxon>Actinomycetes</taxon>
        <taxon>Micrococcales</taxon>
        <taxon>Micrococcaceae</taxon>
        <taxon>Kocuria</taxon>
    </lineage>
</organism>
<comment type="function">
    <text evidence="1">Involved in peptide bond synthesis. Stimulates efficient translation and peptide-bond synthesis on native or reconstituted 70S ribosomes in vitro. Probably functions indirectly by altering the affinity of the ribosome for aminoacyl-tRNA, thus increasing their reactivity as acceptors for peptidyl transferase.</text>
</comment>
<comment type="pathway">
    <text evidence="1">Protein biosynthesis; polypeptide chain elongation.</text>
</comment>
<comment type="subcellular location">
    <subcellularLocation>
        <location evidence="1">Cytoplasm</location>
    </subcellularLocation>
</comment>
<comment type="similarity">
    <text evidence="1">Belongs to the elongation factor P family.</text>
</comment>
<evidence type="ECO:0000255" key="1">
    <source>
        <dbReference type="HAMAP-Rule" id="MF_00141"/>
    </source>
</evidence>
<accession>B2GI94</accession>
<feature type="chain" id="PRO_1000096166" description="Elongation factor P">
    <location>
        <begin position="1"/>
        <end position="187"/>
    </location>
</feature>
<keyword id="KW-0963">Cytoplasm</keyword>
<keyword id="KW-0251">Elongation factor</keyword>
<keyword id="KW-0648">Protein biosynthesis</keyword>
<keyword id="KW-1185">Reference proteome</keyword>
<sequence>MATSNDIKNGTILKLDGNLWQTIEFQHVKPGKGGAFVRTKLRNVTSGKVVDKTFNAGAKIETATVDRSEYQYLYQDGDDYVFMDNSTYDQITVPGVVVGDAANFMLENQNVTVAIHEGAPLYIEMPPSVVLEITYTEPGLQGDRSTGGTKPATVETGYQIQVPLFLEQGTKVKVDTRTGDYLGRVNE</sequence>
<gene>
    <name evidence="1" type="primary">efp</name>
    <name type="ordered locus">KRH_13390</name>
</gene>
<name>EFP_KOCRD</name>
<reference key="1">
    <citation type="journal article" date="2008" name="J. Bacteriol.">
        <title>Complete genome sequence of the soil actinomycete Kocuria rhizophila.</title>
        <authorList>
            <person name="Takarada H."/>
            <person name="Sekine M."/>
            <person name="Kosugi H."/>
            <person name="Matsuo Y."/>
            <person name="Fujisawa T."/>
            <person name="Omata S."/>
            <person name="Kishi E."/>
            <person name="Shimizu A."/>
            <person name="Tsukatani N."/>
            <person name="Tanikawa S."/>
            <person name="Fujita N."/>
            <person name="Harayama S."/>
        </authorList>
    </citation>
    <scope>NUCLEOTIDE SEQUENCE [LARGE SCALE GENOMIC DNA]</scope>
    <source>
        <strain>ATCC 9341 / DSM 348 / NBRC 103217 / DC2201</strain>
    </source>
</reference>
<proteinExistence type="inferred from homology"/>